<feature type="chain" id="PRO_0000094983" description="UPF0291 protein SACOL2589">
    <location>
        <begin position="1"/>
        <end position="76"/>
    </location>
</feature>
<sequence>MKILDRINELANKEKVQPLTVAEKQEQHALRQDYLSMIRGQVLTTFSTIKVVDPIGQDVTPDKVYDLRQQYGYIQN</sequence>
<reference key="1">
    <citation type="journal article" date="2005" name="J. Bacteriol.">
        <title>Insights on evolution of virulence and resistance from the complete genome analysis of an early methicillin-resistant Staphylococcus aureus strain and a biofilm-producing methicillin-resistant Staphylococcus epidermidis strain.</title>
        <authorList>
            <person name="Gill S.R."/>
            <person name="Fouts D.E."/>
            <person name="Archer G.L."/>
            <person name="Mongodin E.F."/>
            <person name="DeBoy R.T."/>
            <person name="Ravel J."/>
            <person name="Paulsen I.T."/>
            <person name="Kolonay J.F."/>
            <person name="Brinkac L.M."/>
            <person name="Beanan M.J."/>
            <person name="Dodson R.J."/>
            <person name="Daugherty S.C."/>
            <person name="Madupu R."/>
            <person name="Angiuoli S.V."/>
            <person name="Durkin A.S."/>
            <person name="Haft D.H."/>
            <person name="Vamathevan J.J."/>
            <person name="Khouri H."/>
            <person name="Utterback T.R."/>
            <person name="Lee C."/>
            <person name="Dimitrov G."/>
            <person name="Jiang L."/>
            <person name="Qin H."/>
            <person name="Weidman J."/>
            <person name="Tran K."/>
            <person name="Kang K.H."/>
            <person name="Hance I.R."/>
            <person name="Nelson K.E."/>
            <person name="Fraser C.M."/>
        </authorList>
    </citation>
    <scope>NUCLEOTIDE SEQUENCE [LARGE SCALE GENOMIC DNA]</scope>
    <source>
        <strain>COL</strain>
    </source>
</reference>
<evidence type="ECO:0000255" key="1">
    <source>
        <dbReference type="HAMAP-Rule" id="MF_01103"/>
    </source>
</evidence>
<keyword id="KW-0963">Cytoplasm</keyword>
<organism>
    <name type="scientific">Staphylococcus aureus (strain COL)</name>
    <dbReference type="NCBI Taxonomy" id="93062"/>
    <lineage>
        <taxon>Bacteria</taxon>
        <taxon>Bacillati</taxon>
        <taxon>Bacillota</taxon>
        <taxon>Bacilli</taxon>
        <taxon>Bacillales</taxon>
        <taxon>Staphylococcaceae</taxon>
        <taxon>Staphylococcus</taxon>
    </lineage>
</organism>
<accession>Q5HCX7</accession>
<gene>
    <name type="ordered locus">SACOL2589</name>
</gene>
<proteinExistence type="inferred from homology"/>
<dbReference type="EMBL" id="CP000046">
    <property type="protein sequence ID" value="AAW38590.1"/>
    <property type="molecule type" value="Genomic_DNA"/>
</dbReference>
<dbReference type="RefSeq" id="WP_000697134.1">
    <property type="nucleotide sequence ID" value="NZ_JBGOFO010000001.1"/>
</dbReference>
<dbReference type="SMR" id="Q5HCX7"/>
<dbReference type="KEGG" id="sac:SACOL2589"/>
<dbReference type="HOGENOM" id="CLU_173137_0_2_9"/>
<dbReference type="Proteomes" id="UP000000530">
    <property type="component" value="Chromosome"/>
</dbReference>
<dbReference type="GO" id="GO:0005737">
    <property type="term" value="C:cytoplasm"/>
    <property type="evidence" value="ECO:0007669"/>
    <property type="project" value="UniProtKB-SubCell"/>
</dbReference>
<dbReference type="Gene3D" id="1.10.287.540">
    <property type="entry name" value="Helix hairpin bin"/>
    <property type="match status" value="1"/>
</dbReference>
<dbReference type="HAMAP" id="MF_01103">
    <property type="entry name" value="UPF0291"/>
    <property type="match status" value="1"/>
</dbReference>
<dbReference type="InterPro" id="IPR009242">
    <property type="entry name" value="DUF896"/>
</dbReference>
<dbReference type="PANTHER" id="PTHR37300:SF2">
    <property type="entry name" value="UPF0291 PROTEIN BC_1827"/>
    <property type="match status" value="1"/>
</dbReference>
<dbReference type="PANTHER" id="PTHR37300">
    <property type="entry name" value="UPF0291 PROTEIN CBO2609/CLC_2481"/>
    <property type="match status" value="1"/>
</dbReference>
<dbReference type="Pfam" id="PF05979">
    <property type="entry name" value="DUF896"/>
    <property type="match status" value="1"/>
</dbReference>
<dbReference type="SUPFAM" id="SSF158221">
    <property type="entry name" value="YnzC-like"/>
    <property type="match status" value="1"/>
</dbReference>
<name>Y2589_STAAC</name>
<protein>
    <recommendedName>
        <fullName evidence="1">UPF0291 protein SACOL2589</fullName>
    </recommendedName>
</protein>
<comment type="subcellular location">
    <subcellularLocation>
        <location evidence="1">Cytoplasm</location>
    </subcellularLocation>
</comment>
<comment type="similarity">
    <text evidence="1">Belongs to the UPF0291 family.</text>
</comment>